<proteinExistence type="inferred from homology"/>
<gene>
    <name evidence="2" type="primary">HA</name>
</gene>
<name>HEMA_I96A3</name>
<feature type="signal peptide" evidence="2">
    <location>
        <begin position="1"/>
        <end position="17"/>
    </location>
</feature>
<feature type="chain" id="PRO_0000440539" description="Hemagglutinin" evidence="2">
    <location>
        <begin position="18"/>
        <end position="565"/>
    </location>
</feature>
<feature type="chain" id="PRO_0000372897" description="Hemagglutinin HA1 chain" evidence="2">
    <location>
        <begin position="18"/>
        <end position="342"/>
    </location>
</feature>
<feature type="chain" id="PRO_0000372898" description="Hemagglutinin HA2 chain" evidence="2">
    <location>
        <begin position="344"/>
        <end position="565"/>
    </location>
</feature>
<feature type="topological domain" description="Extracellular" evidence="2">
    <location>
        <begin position="18"/>
        <end position="528"/>
    </location>
</feature>
<feature type="transmembrane region" description="Helical" evidence="2">
    <location>
        <begin position="529"/>
        <end position="549"/>
    </location>
</feature>
<feature type="topological domain" description="Cytoplasmic" evidence="2">
    <location>
        <begin position="550"/>
        <end position="565"/>
    </location>
</feature>
<feature type="site" description="Cleavage; by host" evidence="2">
    <location>
        <begin position="343"/>
        <end position="344"/>
    </location>
</feature>
<feature type="lipid moiety-binding region" description="S-palmitoyl cysteine; by host" evidence="2">
    <location>
        <position position="554"/>
    </location>
</feature>
<feature type="lipid moiety-binding region" description="S-palmitoyl cysteine; by host" evidence="2">
    <location>
        <position position="561"/>
    </location>
</feature>
<feature type="lipid moiety-binding region" description="S-palmitoyl cysteine; by host" evidence="2">
    <location>
        <position position="564"/>
    </location>
</feature>
<feature type="glycosylation site" description="N-linked (GlcNAc...) asparagine; by host" evidence="2">
    <location>
        <position position="27"/>
    </location>
</feature>
<feature type="glycosylation site" description="N-linked (GlcNAc...) asparagine; by host" evidence="2">
    <location>
        <position position="28"/>
    </location>
</feature>
<feature type="glycosylation site" description="N-linked (GlcNAc...) asparagine; by host" evidence="2">
    <location>
        <position position="40"/>
    </location>
</feature>
<feature type="glycosylation site" description="N-linked (GlcNAc...) asparagine; by host" evidence="2">
    <location>
        <position position="71"/>
    </location>
</feature>
<feature type="glycosylation site" description="N-linked (GlcNAc...) asparagine; by host" evidence="2">
    <location>
        <position position="104"/>
    </location>
</feature>
<feature type="glycosylation site" description="N-linked (GlcNAc...) asparagine; by host" evidence="2">
    <location>
        <position position="142"/>
    </location>
</feature>
<feature type="glycosylation site" description="N-linked (GlcNAc...) asparagine; by host" evidence="2">
    <location>
        <position position="176"/>
    </location>
</feature>
<feature type="glycosylation site" description="N-linked (GlcNAc...) asparagine; by host" evidence="2">
    <location>
        <position position="303"/>
    </location>
</feature>
<feature type="glycosylation site" description="N-linked (GlcNAc...) asparagine; by host" evidence="2">
    <location>
        <position position="497"/>
    </location>
</feature>
<feature type="disulfide bond" description="Interchain (between HA1 and HA2 chains)" evidence="2">
    <location>
        <begin position="21"/>
        <end position="480"/>
    </location>
</feature>
<feature type="disulfide bond" evidence="2">
    <location>
        <begin position="59"/>
        <end position="291"/>
    </location>
</feature>
<feature type="disulfide bond" evidence="2">
    <location>
        <begin position="72"/>
        <end position="84"/>
    </location>
</feature>
<feature type="disulfide bond" evidence="2">
    <location>
        <begin position="107"/>
        <end position="152"/>
    </location>
</feature>
<feature type="disulfide bond" evidence="2">
    <location>
        <begin position="295"/>
        <end position="319"/>
    </location>
</feature>
<feature type="disulfide bond" evidence="2">
    <location>
        <begin position="487"/>
        <end position="491"/>
    </location>
</feature>
<keyword id="KW-1167">Clathrin- and caveolin-independent endocytosis of virus by host</keyword>
<keyword id="KW-1165">Clathrin-mediated endocytosis of virus by host</keyword>
<keyword id="KW-1015">Disulfide bond</keyword>
<keyword id="KW-1170">Fusion of virus membrane with host endosomal membrane</keyword>
<keyword id="KW-1168">Fusion of virus membrane with host membrane</keyword>
<keyword id="KW-0325">Glycoprotein</keyword>
<keyword id="KW-0348">Hemagglutinin</keyword>
<keyword id="KW-1032">Host cell membrane</keyword>
<keyword id="KW-1043">Host membrane</keyword>
<keyword id="KW-0945">Host-virus interaction</keyword>
<keyword id="KW-0449">Lipoprotein</keyword>
<keyword id="KW-0472">Membrane</keyword>
<keyword id="KW-0564">Palmitate</keyword>
<keyword id="KW-0732">Signal</keyword>
<keyword id="KW-0812">Transmembrane</keyword>
<keyword id="KW-1133">Transmembrane helix</keyword>
<keyword id="KW-1161">Viral attachment to host cell</keyword>
<keyword id="KW-0261">Viral envelope protein</keyword>
<keyword id="KW-1162">Viral penetration into host cytoplasm</keyword>
<keyword id="KW-0946">Virion</keyword>
<keyword id="KW-1164">Virus endocytosis by host</keyword>
<keyword id="KW-1160">Virus entry into host cell</keyword>
<sequence length="565" mass="63375">MKAKLLVLLCTFTATYADTICIGYHANNSTDTVDTVLEKNVTVTHSVNLLEDSHNGKLCLLKGIAPLQLGNCSVAGWILGNPECESLISKESWSYIVETPNPENGTCYPGYFADYEELREQLSSVSSFERFEIFPKESSWPNHTVTGVSASCSHNGKSSFYRNLLWLTEKNGLYPNLSKSYVNNKEKEVLVLWGVHHPSNIGVQRAIYHTENAYVSVVSSHYSRRFTPEIAKRPKVRDQEGRINYYWTLLEPGDTIIFEANGNLIAPWYAFALSRGFESGIITSNAPMNECDAKCQTPQGAINSSLPFQNVHPVTIGECPKYVRSAKLRMVTGLRNIPSIQSRGLFGAIAGFIEGGWTGMIDGWYGYHHQNEQGSGYAADQKSTQNAINGITNKVNSVIEKMNTQFTAVGKEFNKLERRMENLNKKVDDGFLDIWTYNAELLVLLENERTLDFHDSNVKNLYEKVKSQLKNNAKEIGNGCFEFYHKCNNECMESVKNGTYDYPKYSEESKLNREKIDGVKLESMGVYQILAIYSTVASSLVLLVSLGAISFWMCSNGSLQCRICI</sequence>
<reference key="1">
    <citation type="submission" date="2006-09" db="EMBL/GenBank/DDBJ databases">
        <title>The NIAID influenza genome sequencing project.</title>
        <authorList>
            <person name="Ghedin E."/>
            <person name="Spiro D."/>
            <person name="Miller N."/>
            <person name="Zaborsky J."/>
            <person name="Feldblyum T."/>
            <person name="Subbu V."/>
            <person name="Shumway M."/>
            <person name="Sparenborg J."/>
            <person name="Groveman L."/>
            <person name="Halpin R."/>
            <person name="Sitz J."/>
            <person name="Koo H."/>
            <person name="Salzberg S.L."/>
            <person name="Webster R.G."/>
            <person name="Hoffmann E."/>
            <person name="Krauss S."/>
            <person name="Naeve C."/>
            <person name="Bao Y."/>
            <person name="Bolotov P."/>
            <person name="Dernovoy D."/>
            <person name="Kiryutin B."/>
            <person name="Lipman D.J."/>
            <person name="Tatusova T."/>
        </authorList>
    </citation>
    <scope>NUCLEOTIDE SEQUENCE [GENOMIC RNA]</scope>
</reference>
<reference key="2">
    <citation type="submission" date="2006-09" db="EMBL/GenBank/DDBJ databases">
        <authorList>
            <consortium name="The NIAID Influenza Genome Sequencing Consortium"/>
        </authorList>
    </citation>
    <scope>NUCLEOTIDE SEQUENCE [GENOMIC RNA]</scope>
</reference>
<organismHost>
    <name type="scientific">Aves</name>
    <dbReference type="NCBI Taxonomy" id="8782"/>
</organismHost>
<organismHost>
    <name type="scientific">Homo sapiens</name>
    <name type="common">Human</name>
    <dbReference type="NCBI Taxonomy" id="9606"/>
</organismHost>
<organismHost>
    <name type="scientific">Sus scrofa</name>
    <name type="common">Pig</name>
    <dbReference type="NCBI Taxonomy" id="9823"/>
</organismHost>
<protein>
    <recommendedName>
        <fullName evidence="2">Hemagglutinin</fullName>
    </recommendedName>
    <component>
        <recommendedName>
            <fullName evidence="2">Hemagglutinin HA1 chain</fullName>
        </recommendedName>
    </component>
    <component>
        <recommendedName>
            <fullName evidence="2">Hemagglutinin HA2 chain</fullName>
        </recommendedName>
    </component>
</protein>
<accession>Q07FI5</accession>
<dbReference type="EMBL" id="CY016236">
    <property type="protein sequence ID" value="ABI95261.1"/>
    <property type="molecule type" value="Other_RNA"/>
</dbReference>
<dbReference type="SMR" id="Q07FI5"/>
<dbReference type="GlyCosmos" id="Q07FI5">
    <property type="glycosylation" value="9 sites, No reported glycans"/>
</dbReference>
<dbReference type="ABCD" id="Q07FI5">
    <property type="antibodies" value="1 sequenced antibody"/>
</dbReference>
<dbReference type="PRO" id="PR:Q07FI5"/>
<dbReference type="Proteomes" id="UP000008586">
    <property type="component" value="Genome"/>
</dbReference>
<dbReference type="GO" id="GO:0020002">
    <property type="term" value="C:host cell plasma membrane"/>
    <property type="evidence" value="ECO:0007669"/>
    <property type="project" value="UniProtKB-SubCell"/>
</dbReference>
<dbReference type="GO" id="GO:0016020">
    <property type="term" value="C:membrane"/>
    <property type="evidence" value="ECO:0007669"/>
    <property type="project" value="UniProtKB-UniRule"/>
</dbReference>
<dbReference type="GO" id="GO:0019031">
    <property type="term" value="C:viral envelope"/>
    <property type="evidence" value="ECO:0007669"/>
    <property type="project" value="UniProtKB-UniRule"/>
</dbReference>
<dbReference type="GO" id="GO:0055036">
    <property type="term" value="C:virion membrane"/>
    <property type="evidence" value="ECO:0007669"/>
    <property type="project" value="UniProtKB-SubCell"/>
</dbReference>
<dbReference type="GO" id="GO:0046789">
    <property type="term" value="F:host cell surface receptor binding"/>
    <property type="evidence" value="ECO:0007669"/>
    <property type="project" value="UniProtKB-UniRule"/>
</dbReference>
<dbReference type="GO" id="GO:0075512">
    <property type="term" value="P:clathrin-dependent endocytosis of virus by host cell"/>
    <property type="evidence" value="ECO:0007669"/>
    <property type="project" value="UniProtKB-UniRule"/>
</dbReference>
<dbReference type="GO" id="GO:0039654">
    <property type="term" value="P:fusion of virus membrane with host endosome membrane"/>
    <property type="evidence" value="ECO:0007669"/>
    <property type="project" value="UniProtKB-UniRule"/>
</dbReference>
<dbReference type="GO" id="GO:0019064">
    <property type="term" value="P:fusion of virus membrane with host plasma membrane"/>
    <property type="evidence" value="ECO:0007669"/>
    <property type="project" value="InterPro"/>
</dbReference>
<dbReference type="GO" id="GO:0046761">
    <property type="term" value="P:viral budding from plasma membrane"/>
    <property type="evidence" value="ECO:0007669"/>
    <property type="project" value="UniProtKB-UniRule"/>
</dbReference>
<dbReference type="GO" id="GO:0019062">
    <property type="term" value="P:virion attachment to host cell"/>
    <property type="evidence" value="ECO:0007669"/>
    <property type="project" value="UniProtKB-KW"/>
</dbReference>
<dbReference type="FunFam" id="3.90.20.10:FF:000002">
    <property type="entry name" value="Hemagglutinin"/>
    <property type="match status" value="1"/>
</dbReference>
<dbReference type="Gene3D" id="3.90.20.10">
    <property type="match status" value="1"/>
</dbReference>
<dbReference type="Gene3D" id="3.90.209.20">
    <property type="match status" value="1"/>
</dbReference>
<dbReference type="Gene3D" id="2.10.77.10">
    <property type="entry name" value="Hemagglutinin Chain A, Domain 2"/>
    <property type="match status" value="1"/>
</dbReference>
<dbReference type="HAMAP" id="MF_04072">
    <property type="entry name" value="INFV_HEMA"/>
    <property type="match status" value="1"/>
</dbReference>
<dbReference type="InterPro" id="IPR008980">
    <property type="entry name" value="Capsid_hemagglutn"/>
</dbReference>
<dbReference type="InterPro" id="IPR013828">
    <property type="entry name" value="Hemagglutn_HA1_a/b_dom_sf"/>
</dbReference>
<dbReference type="InterPro" id="IPR000149">
    <property type="entry name" value="Hemagglutn_influenz_A"/>
</dbReference>
<dbReference type="InterPro" id="IPR001364">
    <property type="entry name" value="Hemagglutn_influenz_A/B"/>
</dbReference>
<dbReference type="Pfam" id="PF00509">
    <property type="entry name" value="Hemagglutinin"/>
    <property type="match status" value="1"/>
</dbReference>
<dbReference type="PRINTS" id="PR00330">
    <property type="entry name" value="HEMAGGLUTN1"/>
</dbReference>
<dbReference type="PRINTS" id="PR00329">
    <property type="entry name" value="HEMAGGLUTN12"/>
</dbReference>
<dbReference type="SUPFAM" id="SSF58064">
    <property type="entry name" value="Influenza hemagglutinin (stalk)"/>
    <property type="match status" value="1"/>
</dbReference>
<dbReference type="SUPFAM" id="SSF49818">
    <property type="entry name" value="Viral protein domain"/>
    <property type="match status" value="1"/>
</dbReference>
<organism>
    <name type="scientific">Influenza A virus (strain A/China:Nanchang/11/1996 H1N1)</name>
    <dbReference type="NCBI Taxonomy" id="394786"/>
    <lineage>
        <taxon>Viruses</taxon>
        <taxon>Riboviria</taxon>
        <taxon>Orthornavirae</taxon>
        <taxon>Negarnaviricota</taxon>
        <taxon>Polyploviricotina</taxon>
        <taxon>Insthoviricetes</taxon>
        <taxon>Articulavirales</taxon>
        <taxon>Orthomyxoviridae</taxon>
        <taxon>Alphainfluenzavirus</taxon>
        <taxon>Alphainfluenzavirus influenzae</taxon>
        <taxon>Influenza A virus</taxon>
    </lineage>
</organism>
<evidence type="ECO:0000250" key="1">
    <source>
        <dbReference type="UniProtKB" id="Q289M7"/>
    </source>
</evidence>
<evidence type="ECO:0000255" key="2">
    <source>
        <dbReference type="HAMAP-Rule" id="MF_04072"/>
    </source>
</evidence>
<evidence type="ECO:0000305" key="3"/>
<comment type="function">
    <text evidence="2">Binds to sialic acid-containing receptors on the cell surface, bringing about the attachment of the virus particle to the cell. This attachment induces virion internalization either through clathrin-dependent endocytosis or through clathrin- and caveolin-independent pathway. Plays a major role in the determination of host range restriction and virulence. Class I viral fusion protein. Responsible for penetration of the virus into the cell cytoplasm by mediating the fusion of the membrane of the endocytosed virus particle with the endosomal membrane. Low pH in endosomes induces an irreversible conformational change in HA2, releasing the fusion hydrophobic peptide. Several trimers are required to form a competent fusion pore.</text>
</comment>
<comment type="subunit">
    <text evidence="1">Homotrimer of disulfide-linked HA1-HA2. Interacts with human CACNA1C.</text>
</comment>
<comment type="subcellular location">
    <subcellularLocation>
        <location evidence="2">Virion membrane</location>
        <topology evidence="2">Single-pass type I membrane protein</topology>
    </subcellularLocation>
    <subcellularLocation>
        <location evidence="2">Host apical cell membrane</location>
        <topology evidence="2">Single-pass type I membrane protein</topology>
    </subcellularLocation>
    <text evidence="2">Targeted to the apical plasma membrane in epithelial polarized cells through a signal present in the transmembrane domain. Associated with glycosphingolipid- and cholesterol-enriched detergent-resistant lipid rafts.</text>
</comment>
<comment type="PTM">
    <text evidence="2">Palmitoylated.</text>
</comment>
<comment type="PTM">
    <text evidence="2">In natural infection, inactive HA is matured into HA1 and HA2 outside the cell by one or more trypsin-like, arginine-specific endoprotease secreted by the bronchial epithelial cells. One identified protease that may be involved in this process is secreted in lungs by club cells.</text>
</comment>
<comment type="miscellaneous">
    <text>Major glycoprotein, comprises over 80% of the envelope proteins present in virus particle.</text>
</comment>
<comment type="miscellaneous">
    <text>The extent of infection into host organism is determined by HA. Influenza viruses bud from the apical surface of polarized epithelial cells (e.g. bronchial epithelial cells) into lumen of lungs and are therefore usually pneumotropic. The reason is that HA is cleaved by tryptase clara which is restricted to lungs. However, HAs of H5 and H7 pantropic avian viruses subtypes can be cleaved by furin and subtilisin-type enzymes, allowing the virus to grow in other organs than lungs.</text>
</comment>
<comment type="miscellaneous">
    <text evidence="3">The influenza A genome consist of 8 RNA segments. Genetic variation of hemagglutinin and/or neuraminidase genes results in the emergence of new influenza strains. The mechanism of variation can be the result of point mutations or the result of genetic reassortment between segments of two different strains.</text>
</comment>
<comment type="similarity">
    <text evidence="2">Belongs to the influenza viruses hemagglutinin family.</text>
</comment>